<reference key="1">
    <citation type="journal article" date="2002" name="Biochemistry">
        <title>The presence of the WGD motif in CC8 heterodimeric disintegrin increases its inhibitory effect on alphaII(b)beta3, alpha(v)beta3, and alpha5beta1 integrins.</title>
        <authorList>
            <person name="Calvete J.J."/>
            <person name="Fox J.W."/>
            <person name="Agelan A."/>
            <person name="Niewiarowski S."/>
            <person name="Marcinkiewicz C."/>
        </authorList>
    </citation>
    <scope>PROTEIN SEQUENCE</scope>
    <source>
        <tissue>Venom</tissue>
    </source>
</reference>
<keyword id="KW-0130">Cell adhesion</keyword>
<keyword id="KW-1217">Cell adhesion impairing toxin</keyword>
<keyword id="KW-0903">Direct protein sequencing</keyword>
<keyword id="KW-1015">Disulfide bond</keyword>
<keyword id="KW-0964">Secreted</keyword>
<keyword id="KW-0800">Toxin</keyword>
<proteinExistence type="evidence at protein level"/>
<dbReference type="SMR" id="P83044"/>
<dbReference type="GO" id="GO:0005576">
    <property type="term" value="C:extracellular region"/>
    <property type="evidence" value="ECO:0007669"/>
    <property type="project" value="UniProtKB-SubCell"/>
</dbReference>
<dbReference type="GO" id="GO:0090729">
    <property type="term" value="F:toxin activity"/>
    <property type="evidence" value="ECO:0007669"/>
    <property type="project" value="UniProtKB-KW"/>
</dbReference>
<dbReference type="GO" id="GO:0007155">
    <property type="term" value="P:cell adhesion"/>
    <property type="evidence" value="ECO:0007669"/>
    <property type="project" value="UniProtKB-KW"/>
</dbReference>
<dbReference type="Gene3D" id="4.10.70.10">
    <property type="entry name" value="Disintegrin domain"/>
    <property type="match status" value="1"/>
</dbReference>
<dbReference type="InterPro" id="IPR001762">
    <property type="entry name" value="Disintegrin_dom"/>
</dbReference>
<dbReference type="InterPro" id="IPR036436">
    <property type="entry name" value="Disintegrin_dom_sf"/>
</dbReference>
<dbReference type="PANTHER" id="PTHR11905">
    <property type="entry name" value="ADAM A DISINTEGRIN AND METALLOPROTEASE DOMAIN"/>
    <property type="match status" value="1"/>
</dbReference>
<dbReference type="PANTHER" id="PTHR11905:SF159">
    <property type="entry name" value="ADAM METALLOPROTEASE"/>
    <property type="match status" value="1"/>
</dbReference>
<dbReference type="Pfam" id="PF00200">
    <property type="entry name" value="Disintegrin"/>
    <property type="match status" value="1"/>
</dbReference>
<dbReference type="PRINTS" id="PR00289">
    <property type="entry name" value="DISINTEGRIN"/>
</dbReference>
<dbReference type="SMART" id="SM00050">
    <property type="entry name" value="DISIN"/>
    <property type="match status" value="1"/>
</dbReference>
<dbReference type="SUPFAM" id="SSF57552">
    <property type="entry name" value="Blood coagulation inhibitor (disintegrin)"/>
    <property type="match status" value="1"/>
</dbReference>
<dbReference type="PROSITE" id="PS50214">
    <property type="entry name" value="DISINTEGRIN_2"/>
    <property type="match status" value="1"/>
</dbReference>
<sequence>NSAHPCCDPVTCKPKRGEHCISGPCCENCKFLTAGTVCLPAWGDFDNDLCTGISSDCPRNPWHKS</sequence>
<organism>
    <name type="scientific">Cerastes cerastes</name>
    <name type="common">Horned desert viper</name>
    <dbReference type="NCBI Taxonomy" id="8697"/>
    <lineage>
        <taxon>Eukaryota</taxon>
        <taxon>Metazoa</taxon>
        <taxon>Chordata</taxon>
        <taxon>Craniata</taxon>
        <taxon>Vertebrata</taxon>
        <taxon>Euteleostomi</taxon>
        <taxon>Lepidosauria</taxon>
        <taxon>Squamata</taxon>
        <taxon>Bifurcata</taxon>
        <taxon>Unidentata</taxon>
        <taxon>Episquamata</taxon>
        <taxon>Toxicofera</taxon>
        <taxon>Serpentes</taxon>
        <taxon>Colubroidea</taxon>
        <taxon>Viperidae</taxon>
        <taxon>Viperinae</taxon>
        <taxon>Cerastes</taxon>
    </lineage>
</organism>
<evidence type="ECO:0000255" key="1">
    <source>
        <dbReference type="PROSITE-ProRule" id="PRU00068"/>
    </source>
</evidence>
<evidence type="ECO:0000305" key="2"/>
<protein>
    <recommendedName>
        <fullName>Disintegrin CC8B</fullName>
    </recommendedName>
</protein>
<name>DID8B_CERCE</name>
<comment type="function">
    <text>Inhibits integrins alpha-IIb/beta-3 (ITGA2B/ITGB3), alpha-V/beta-3 (ITGAV/ITGB3), and alpha-5/beta-1 (ITGA5/ITGB1).</text>
</comment>
<comment type="subunit">
    <text>Heterodimer with CC8A; disulfide-linked.</text>
</comment>
<comment type="subcellular location">
    <subcellularLocation>
        <location>Secreted</location>
    </subcellularLocation>
</comment>
<comment type="tissue specificity">
    <text>Expressed by the venom gland.</text>
</comment>
<comment type="similarity">
    <text evidence="2">Belongs to the disintegrin family. Dimeric disintegrin subfamily.</text>
</comment>
<accession>P83044</accession>
<feature type="chain" id="PRO_0000101789" description="Disintegrin CC8B">
    <location>
        <begin position="1"/>
        <end position="65"/>
    </location>
</feature>
<feature type="domain" description="Disintegrin" evidence="1">
    <location>
        <begin position="1"/>
        <end position="65"/>
    </location>
</feature>
<feature type="short sequence motif" description="Cell attachment site; atypical (WGD)">
    <location>
        <begin position="42"/>
        <end position="44"/>
    </location>
</feature>
<feature type="disulfide bond" evidence="1">
    <location>
        <begin position="6"/>
        <end position="29"/>
    </location>
</feature>
<feature type="disulfide bond" description="Interchain (with CC8A)" evidence="1">
    <location>
        <position position="7"/>
    </location>
</feature>
<feature type="disulfide bond" description="Interchain (with CC8A)" evidence="1">
    <location>
        <position position="12"/>
    </location>
</feature>
<feature type="disulfide bond" evidence="1">
    <location>
        <begin position="20"/>
        <end position="26"/>
    </location>
</feature>
<feature type="disulfide bond" evidence="1">
    <location>
        <begin position="25"/>
        <end position="50"/>
    </location>
</feature>
<feature type="disulfide bond" evidence="1">
    <location>
        <begin position="38"/>
        <end position="57"/>
    </location>
</feature>